<sequence>MLKVGLTGGIGSGKSSVARRLAAHGALVIDADAIAREVVEPGTPALAEIVAEFGDQVLTPEGRLDRARLGEIVFADETKLARLNAIVHPRVGERTQELMAQAKEGTIVVYDVPLLVENNLADQYDVVIVVDVPVHTQVERVTANRGMPEEQVRARINAQASREQRRAVADIIIDNSGTEEELDARVAEVWEELQRRLHSR</sequence>
<organism>
    <name type="scientific">Thermobifida fusca (strain YX)</name>
    <dbReference type="NCBI Taxonomy" id="269800"/>
    <lineage>
        <taxon>Bacteria</taxon>
        <taxon>Bacillati</taxon>
        <taxon>Actinomycetota</taxon>
        <taxon>Actinomycetes</taxon>
        <taxon>Streptosporangiales</taxon>
        <taxon>Nocardiopsidaceae</taxon>
        <taxon>Thermobifida</taxon>
    </lineage>
</organism>
<protein>
    <recommendedName>
        <fullName evidence="1">Dephospho-CoA kinase</fullName>
        <ecNumber evidence="1">2.7.1.24</ecNumber>
    </recommendedName>
    <alternativeName>
        <fullName evidence="1">Dephosphocoenzyme A kinase</fullName>
    </alternativeName>
</protein>
<keyword id="KW-0067">ATP-binding</keyword>
<keyword id="KW-0173">Coenzyme A biosynthesis</keyword>
<keyword id="KW-0963">Cytoplasm</keyword>
<keyword id="KW-0418">Kinase</keyword>
<keyword id="KW-0547">Nucleotide-binding</keyword>
<keyword id="KW-0808">Transferase</keyword>
<gene>
    <name evidence="1" type="primary">coaE</name>
    <name type="ordered locus">Tfu_1192</name>
</gene>
<evidence type="ECO:0000255" key="1">
    <source>
        <dbReference type="HAMAP-Rule" id="MF_00376"/>
    </source>
</evidence>
<evidence type="ECO:0000305" key="2"/>
<dbReference type="EC" id="2.7.1.24" evidence="1"/>
<dbReference type="EMBL" id="CP000088">
    <property type="protein sequence ID" value="AAZ55230.1"/>
    <property type="status" value="ALT_INIT"/>
    <property type="molecule type" value="Genomic_DNA"/>
</dbReference>
<dbReference type="SMR" id="Q47QN9"/>
<dbReference type="STRING" id="269800.Tfu_1192"/>
<dbReference type="KEGG" id="tfu:Tfu_1192"/>
<dbReference type="eggNOG" id="COG0237">
    <property type="taxonomic scope" value="Bacteria"/>
</dbReference>
<dbReference type="HOGENOM" id="CLU_057180_1_1_11"/>
<dbReference type="UniPathway" id="UPA00241">
    <property type="reaction ID" value="UER00356"/>
</dbReference>
<dbReference type="GO" id="GO:0005737">
    <property type="term" value="C:cytoplasm"/>
    <property type="evidence" value="ECO:0007669"/>
    <property type="project" value="UniProtKB-SubCell"/>
</dbReference>
<dbReference type="GO" id="GO:0005524">
    <property type="term" value="F:ATP binding"/>
    <property type="evidence" value="ECO:0007669"/>
    <property type="project" value="UniProtKB-UniRule"/>
</dbReference>
<dbReference type="GO" id="GO:0004140">
    <property type="term" value="F:dephospho-CoA kinase activity"/>
    <property type="evidence" value="ECO:0007669"/>
    <property type="project" value="UniProtKB-UniRule"/>
</dbReference>
<dbReference type="GO" id="GO:0015937">
    <property type="term" value="P:coenzyme A biosynthetic process"/>
    <property type="evidence" value="ECO:0007669"/>
    <property type="project" value="UniProtKB-UniRule"/>
</dbReference>
<dbReference type="CDD" id="cd02022">
    <property type="entry name" value="DPCK"/>
    <property type="match status" value="1"/>
</dbReference>
<dbReference type="FunFam" id="3.40.50.300:FF:000991">
    <property type="entry name" value="Dephospho-CoA kinase"/>
    <property type="match status" value="1"/>
</dbReference>
<dbReference type="Gene3D" id="3.40.50.300">
    <property type="entry name" value="P-loop containing nucleotide triphosphate hydrolases"/>
    <property type="match status" value="1"/>
</dbReference>
<dbReference type="HAMAP" id="MF_00376">
    <property type="entry name" value="Dephospho_CoA_kinase"/>
    <property type="match status" value="1"/>
</dbReference>
<dbReference type="InterPro" id="IPR001977">
    <property type="entry name" value="Depp_CoAkinase"/>
</dbReference>
<dbReference type="InterPro" id="IPR027417">
    <property type="entry name" value="P-loop_NTPase"/>
</dbReference>
<dbReference type="NCBIfam" id="TIGR00152">
    <property type="entry name" value="dephospho-CoA kinase"/>
    <property type="match status" value="1"/>
</dbReference>
<dbReference type="NCBIfam" id="NF002879">
    <property type="entry name" value="PRK03333.1"/>
    <property type="match status" value="1"/>
</dbReference>
<dbReference type="PANTHER" id="PTHR10695:SF46">
    <property type="entry name" value="BIFUNCTIONAL COENZYME A SYNTHASE-RELATED"/>
    <property type="match status" value="1"/>
</dbReference>
<dbReference type="PANTHER" id="PTHR10695">
    <property type="entry name" value="DEPHOSPHO-COA KINASE-RELATED"/>
    <property type="match status" value="1"/>
</dbReference>
<dbReference type="Pfam" id="PF01121">
    <property type="entry name" value="CoaE"/>
    <property type="match status" value="1"/>
</dbReference>
<dbReference type="SUPFAM" id="SSF52540">
    <property type="entry name" value="P-loop containing nucleoside triphosphate hydrolases"/>
    <property type="match status" value="1"/>
</dbReference>
<dbReference type="PROSITE" id="PS51219">
    <property type="entry name" value="DPCK"/>
    <property type="match status" value="1"/>
</dbReference>
<accession>Q47QN9</accession>
<proteinExistence type="inferred from homology"/>
<comment type="function">
    <text evidence="1">Catalyzes the phosphorylation of the 3'-hydroxyl group of dephosphocoenzyme A to form coenzyme A.</text>
</comment>
<comment type="catalytic activity">
    <reaction evidence="1">
        <text>3'-dephospho-CoA + ATP = ADP + CoA + H(+)</text>
        <dbReference type="Rhea" id="RHEA:18245"/>
        <dbReference type="ChEBI" id="CHEBI:15378"/>
        <dbReference type="ChEBI" id="CHEBI:30616"/>
        <dbReference type="ChEBI" id="CHEBI:57287"/>
        <dbReference type="ChEBI" id="CHEBI:57328"/>
        <dbReference type="ChEBI" id="CHEBI:456216"/>
        <dbReference type="EC" id="2.7.1.24"/>
    </reaction>
</comment>
<comment type="pathway">
    <text evidence="1">Cofactor biosynthesis; coenzyme A biosynthesis; CoA from (R)-pantothenate: step 5/5.</text>
</comment>
<comment type="subcellular location">
    <subcellularLocation>
        <location evidence="1">Cytoplasm</location>
    </subcellularLocation>
</comment>
<comment type="similarity">
    <text evidence="1">Belongs to the CoaE family.</text>
</comment>
<comment type="sequence caution" evidence="2">
    <conflict type="erroneous initiation">
        <sequence resource="EMBL-CDS" id="AAZ55230"/>
    </conflict>
</comment>
<name>COAE_THEFY</name>
<feature type="chain" id="PRO_0000243358" description="Dephospho-CoA kinase">
    <location>
        <begin position="1"/>
        <end position="200"/>
    </location>
</feature>
<feature type="domain" description="DPCK" evidence="1">
    <location>
        <begin position="3"/>
        <end position="200"/>
    </location>
</feature>
<feature type="binding site" evidence="1">
    <location>
        <begin position="11"/>
        <end position="16"/>
    </location>
    <ligand>
        <name>ATP</name>
        <dbReference type="ChEBI" id="CHEBI:30616"/>
    </ligand>
</feature>
<reference key="1">
    <citation type="journal article" date="2007" name="J. Bacteriol.">
        <title>Genome sequence and analysis of the soil cellulolytic actinomycete Thermobifida fusca YX.</title>
        <authorList>
            <person name="Lykidis A."/>
            <person name="Mavromatis K."/>
            <person name="Ivanova N."/>
            <person name="Anderson I."/>
            <person name="Land M."/>
            <person name="DiBartolo G."/>
            <person name="Martinez M."/>
            <person name="Lapidus A."/>
            <person name="Lucas S."/>
            <person name="Copeland A."/>
            <person name="Richardson P."/>
            <person name="Wilson D.B."/>
            <person name="Kyrpides N."/>
        </authorList>
    </citation>
    <scope>NUCLEOTIDE SEQUENCE [LARGE SCALE GENOMIC DNA]</scope>
    <source>
        <strain>YX</strain>
    </source>
</reference>